<proteinExistence type="inferred from homology"/>
<name>VRAB_STAHJ</name>
<keyword id="KW-0012">Acyltransferase</keyword>
<keyword id="KW-0808">Transferase</keyword>
<evidence type="ECO:0000250" key="1"/>
<evidence type="ECO:0000305" key="2"/>
<comment type="similarity">
    <text evidence="2">Belongs to the thiolase-like superfamily. Thiolase family.</text>
</comment>
<organism>
    <name type="scientific">Staphylococcus haemolyticus (strain JCSC1435)</name>
    <dbReference type="NCBI Taxonomy" id="279808"/>
    <lineage>
        <taxon>Bacteria</taxon>
        <taxon>Bacillati</taxon>
        <taxon>Bacillota</taxon>
        <taxon>Bacilli</taxon>
        <taxon>Bacillales</taxon>
        <taxon>Staphylococcaceae</taxon>
        <taxon>Staphylococcus</taxon>
    </lineage>
</organism>
<dbReference type="EC" id="2.3.1.-"/>
<dbReference type="EMBL" id="AP006716">
    <property type="protein sequence ID" value="BAE05726.1"/>
    <property type="molecule type" value="Genomic_DNA"/>
</dbReference>
<dbReference type="RefSeq" id="WP_011276672.1">
    <property type="nucleotide sequence ID" value="NC_007168.1"/>
</dbReference>
<dbReference type="SMR" id="Q4L3Q1"/>
<dbReference type="GeneID" id="93781639"/>
<dbReference type="KEGG" id="sha:SH2417"/>
<dbReference type="eggNOG" id="COG0183">
    <property type="taxonomic scope" value="Bacteria"/>
</dbReference>
<dbReference type="HOGENOM" id="CLU_031026_2_1_9"/>
<dbReference type="OrthoDB" id="9764892at2"/>
<dbReference type="Proteomes" id="UP000000543">
    <property type="component" value="Chromosome"/>
</dbReference>
<dbReference type="GO" id="GO:0005737">
    <property type="term" value="C:cytoplasm"/>
    <property type="evidence" value="ECO:0007669"/>
    <property type="project" value="UniProtKB-ARBA"/>
</dbReference>
<dbReference type="GO" id="GO:0003988">
    <property type="term" value="F:acetyl-CoA C-acyltransferase activity"/>
    <property type="evidence" value="ECO:0007669"/>
    <property type="project" value="TreeGrafter"/>
</dbReference>
<dbReference type="GO" id="GO:0006635">
    <property type="term" value="P:fatty acid beta-oxidation"/>
    <property type="evidence" value="ECO:0007669"/>
    <property type="project" value="TreeGrafter"/>
</dbReference>
<dbReference type="GO" id="GO:0010124">
    <property type="term" value="P:phenylacetate catabolic process"/>
    <property type="evidence" value="ECO:0007669"/>
    <property type="project" value="TreeGrafter"/>
</dbReference>
<dbReference type="CDD" id="cd00751">
    <property type="entry name" value="thiolase"/>
    <property type="match status" value="1"/>
</dbReference>
<dbReference type="Gene3D" id="3.40.47.10">
    <property type="match status" value="2"/>
</dbReference>
<dbReference type="InterPro" id="IPR002155">
    <property type="entry name" value="Thiolase"/>
</dbReference>
<dbReference type="InterPro" id="IPR016039">
    <property type="entry name" value="Thiolase-like"/>
</dbReference>
<dbReference type="InterPro" id="IPR050215">
    <property type="entry name" value="Thiolase-like_sf_Thiolase"/>
</dbReference>
<dbReference type="InterPro" id="IPR020617">
    <property type="entry name" value="Thiolase_C"/>
</dbReference>
<dbReference type="InterPro" id="IPR020613">
    <property type="entry name" value="Thiolase_CS"/>
</dbReference>
<dbReference type="InterPro" id="IPR020616">
    <property type="entry name" value="Thiolase_N"/>
</dbReference>
<dbReference type="NCBIfam" id="TIGR01930">
    <property type="entry name" value="AcCoA-C-Actrans"/>
    <property type="match status" value="1"/>
</dbReference>
<dbReference type="PANTHER" id="PTHR43853">
    <property type="entry name" value="3-KETOACYL-COA THIOLASE, PEROXISOMAL"/>
    <property type="match status" value="1"/>
</dbReference>
<dbReference type="PANTHER" id="PTHR43853:SF3">
    <property type="entry name" value="ACETYL-COA C-ACETYLTRANSFERASE YHFS-RELATED"/>
    <property type="match status" value="1"/>
</dbReference>
<dbReference type="Pfam" id="PF02803">
    <property type="entry name" value="Thiolase_C"/>
    <property type="match status" value="1"/>
</dbReference>
<dbReference type="Pfam" id="PF00108">
    <property type="entry name" value="Thiolase_N"/>
    <property type="match status" value="1"/>
</dbReference>
<dbReference type="PIRSF" id="PIRSF000429">
    <property type="entry name" value="Ac-CoA_Ac_transf"/>
    <property type="match status" value="1"/>
</dbReference>
<dbReference type="SUPFAM" id="SSF53901">
    <property type="entry name" value="Thiolase-like"/>
    <property type="match status" value="2"/>
</dbReference>
<dbReference type="PROSITE" id="PS00737">
    <property type="entry name" value="THIOLASE_2"/>
    <property type="match status" value="1"/>
</dbReference>
<sequence>MKEAVVIWAKRTPFGKYGGALRHLEPEALLLPLFQNLKQTFPEVMDQVDDVVLGNVVGNGGNVARKSLLEAGLNHRIPGITLDRQCGSGLESIIYACRMVQCEAGKVFIAGGVESTSRAPWKIKRPQSVYEMQLPQFFERASFAPEGQDPSMIEAAENVAQHYNISRNDQDLFAARSHRLVATHFNNGDINREIVPLTIKGALFDRDESLKPNLTEARLHRLRPILPNGTVTVGNSCMKNDGAGIALIMEKEMAVAMGIKWGMLYRDAVTTGVDPTLLGIGPVPAVSQLLKRQKLNIEDISAIELNEAFSSQVLASINELHLGLDKVNQWGGAIATGHPYSASGAALVARLLNLPNWQYGIATMGIGGGMGNAVLFEKWRQ</sequence>
<reference key="1">
    <citation type="journal article" date="2005" name="J. Bacteriol.">
        <title>Whole-genome sequencing of Staphylococcus haemolyticus uncovers the extreme plasticity of its genome and the evolution of human-colonizing staphylococcal species.</title>
        <authorList>
            <person name="Takeuchi F."/>
            <person name="Watanabe S."/>
            <person name="Baba T."/>
            <person name="Yuzawa H."/>
            <person name="Ito T."/>
            <person name="Morimoto Y."/>
            <person name="Kuroda M."/>
            <person name="Cui L."/>
            <person name="Takahashi M."/>
            <person name="Ankai A."/>
            <person name="Baba S."/>
            <person name="Fukui S."/>
            <person name="Lee J.C."/>
            <person name="Hiramatsu K."/>
        </authorList>
    </citation>
    <scope>NUCLEOTIDE SEQUENCE [LARGE SCALE GENOMIC DNA]</scope>
    <source>
        <strain>JCSC1435</strain>
    </source>
</reference>
<gene>
    <name type="primary">vraB</name>
    <name type="ordered locus">SH2417</name>
</gene>
<accession>Q4L3Q1</accession>
<feature type="chain" id="PRO_0000206434" description="Putative acetyl-CoA C-acetyltransferase VraB">
    <location>
        <begin position="1"/>
        <end position="381"/>
    </location>
</feature>
<feature type="active site" description="Acyl-thioester intermediate" evidence="1">
    <location>
        <position position="86"/>
    </location>
</feature>
<feature type="active site" description="Proton acceptor" evidence="1">
    <location>
        <position position="338"/>
    </location>
</feature>
<protein>
    <recommendedName>
        <fullName>Putative acetyl-CoA C-acetyltransferase VraB</fullName>
        <ecNumber>2.3.1.-</ecNumber>
    </recommendedName>
</protein>